<name>TX36B_CTEON</name>
<dbReference type="SMR" id="P85276"/>
<dbReference type="ArachnoServer" id="AS000313">
    <property type="toxin name" value="U5-ctenitoxin-Co1a"/>
</dbReference>
<dbReference type="GO" id="GO:0005576">
    <property type="term" value="C:extracellular region"/>
    <property type="evidence" value="ECO:0007669"/>
    <property type="project" value="UniProtKB-SubCell"/>
</dbReference>
<dbReference type="GO" id="GO:0017080">
    <property type="term" value="F:sodium channel regulator activity"/>
    <property type="evidence" value="ECO:0007669"/>
    <property type="project" value="UniProtKB-KW"/>
</dbReference>
<dbReference type="GO" id="GO:0090729">
    <property type="term" value="F:toxin activity"/>
    <property type="evidence" value="ECO:0007669"/>
    <property type="project" value="UniProtKB-KW"/>
</dbReference>
<dbReference type="InterPro" id="IPR035285">
    <property type="entry name" value="CNTX"/>
</dbReference>
<dbReference type="Pfam" id="PF17492">
    <property type="entry name" value="D_CNTX"/>
    <property type="match status" value="1"/>
</dbReference>
<sequence>TATCAGQDKPCQKHCDCCGPKGECVCEGPCICRQG</sequence>
<protein>
    <recommendedName>
        <fullName>U5-ctenitoxin-Co1a</fullName>
        <shortName>U5-CNTX-Co1a</shortName>
    </recommendedName>
    <alternativeName>
        <fullName>Neurotoxin Oc F32-8</fullName>
    </alternativeName>
</protein>
<accession>P85276</accession>
<proteinExistence type="evidence at protein level"/>
<keyword id="KW-0903">Direct protein sequencing</keyword>
<keyword id="KW-1015">Disulfide bond</keyword>
<keyword id="KW-0872">Ion channel impairing toxin</keyword>
<keyword id="KW-0960">Knottin</keyword>
<keyword id="KW-0528">Neurotoxin</keyword>
<keyword id="KW-0964">Secreted</keyword>
<keyword id="KW-0800">Toxin</keyword>
<keyword id="KW-0738">Voltage-gated sodium channel impairing toxin</keyword>
<evidence type="ECO:0000250" key="1"/>
<evidence type="ECO:0000269" key="2">
    <source ref="1"/>
</evidence>
<evidence type="ECO:0000305" key="3"/>
<comment type="function">
    <text evidence="1">Blocks voltage-gated sodium channels (Nav).</text>
</comment>
<comment type="subcellular location">
    <subcellularLocation>
        <location evidence="2">Secreted</location>
    </subcellularLocation>
</comment>
<comment type="tissue specificity">
    <text evidence="2">Expressed by the venom gland.</text>
</comment>
<comment type="domain">
    <text evidence="3">The presence of a 'disulfide through disulfide knot' structurally defines this protein as a knottin.</text>
</comment>
<comment type="mass spectrometry"/>
<comment type="similarity">
    <text evidence="3">Belongs to the neurotoxin 03 (Tx2) family. 06 subfamily.</text>
</comment>
<reference evidence="3" key="1">
    <citation type="submission" date="2007-07" db="UniProtKB">
        <authorList>
            <person name="Borges M.H."/>
            <person name="Oliveira C.F.B."/>
            <person name="Goncalves J.M."/>
            <person name="Rates B."/>
            <person name="Santos D.M."/>
            <person name="Pimenta A.M.C."/>
            <person name="Cordeiro M.N."/>
            <person name="Richardson M."/>
        </authorList>
    </citation>
    <scope>PROTEIN SEQUENCE</scope>
    <scope>SUBCELLULAR LOCATION</scope>
    <scope>TISSUE SPECIFICITY</scope>
    <scope>MASS SPECTROMETRY</scope>
    <source>
        <tissue>Venom</tissue>
    </source>
</reference>
<feature type="chain" id="PRO_0000302116" description="U5-ctenitoxin-Co1a">
    <location>
        <begin position="1"/>
        <end position="35" status="greater than"/>
    </location>
</feature>
<feature type="disulfide bond" evidence="3">
    <location>
        <begin position="4"/>
        <end position="18"/>
    </location>
</feature>
<feature type="disulfide bond" evidence="3">
    <location>
        <begin position="11"/>
        <end position="24"/>
    </location>
</feature>
<feature type="disulfide bond" evidence="3">
    <location>
        <begin position="15"/>
        <end status="unknown"/>
    </location>
</feature>
<feature type="disulfide bond" evidence="3">
    <location>
        <begin position="17"/>
        <end position="32"/>
    </location>
</feature>
<feature type="disulfide bond" evidence="3">
    <location>
        <begin position="26"/>
        <end position="30"/>
    </location>
</feature>
<feature type="non-terminal residue">
    <location>
        <position position="35"/>
    </location>
</feature>
<organism>
    <name type="scientific">Ctenus ornatus</name>
    <name type="common">Brazilian spider</name>
    <name type="synonym">Oligoctenus ornatus</name>
    <dbReference type="NCBI Taxonomy" id="406443"/>
    <lineage>
        <taxon>Eukaryota</taxon>
        <taxon>Metazoa</taxon>
        <taxon>Ecdysozoa</taxon>
        <taxon>Arthropoda</taxon>
        <taxon>Chelicerata</taxon>
        <taxon>Arachnida</taxon>
        <taxon>Araneae</taxon>
        <taxon>Araneomorphae</taxon>
        <taxon>Entelegynae</taxon>
        <taxon>Lycosoidea</taxon>
        <taxon>Ctenidae</taxon>
        <taxon>Oligoctenus</taxon>
    </lineage>
</organism>